<sequence>MNRRRAYEDDGDFYGERNKKRRRVSENQEMEERLETLILRVGENSTSSLESNLEGLVSVLESDLGNFRSKILRILSDCPIKMPEKCTIYSTMVGLMNAKNYNFGGEFVEYMVKTFKDSLKQCQWDAARYALRFLADLVNCHVISTNSLLQLLDSMVDAANEDNVPQVRRDWYVFAVLSTLPWVGRELYEKKESALENLLVRIEVFLNKRTKKHHNALRVWSVDAPHPQEEYLDCLWAQIRKLRQDNWTEKHIPRPYLAFDSVLCEALQHNIPVIHPPPHQDSFEYPMPWVVYRMFDYTDCPPGPILPGAHSIERFLIEEHLHSIIEMHRWERKDCAIHLLMLPYKDKIPLEYCIVEVIFAELFHMPTPRYLEICYGSILIELCKQQPSKMPQVLAQATEILFMRIDSMNTSCFDRFVNWFSYHLSNFQFRWSWDDWDSCLLLENEHPRPKFIQEVLLKCLRFSYHDRFKEMMPEGYAKLIPKPPVPHYKYSMEGAASLPGTATAHKLVVAIRQKCNAEDVLNELNDLPNSRDASDTDMAEAPFNPLKIDVFVQTLLNLGSKSFSHSFAAISKFHAVFKALAETEEAQICILHNMFELWVDHQQMMVVIVDKLLKVQIVECSAVATWVFSKEMVGEFTKMYLWEILHLTIKKMNQHVTKLSREMNEAKEKLARTVESSSSESEDEAASPNAQKRRKNTEGSGEKPTEEQVERMEEKLEAAYVDQKRLFLIIFQRFIMILSEHLVKCDTDGRDYDTDWYRWTIGRLQQVFMMHHEQVQKYSSTLESLLFTSDLDPHILDVFHQFTALRA</sequence>
<name>NCBP1_ANOGA</name>
<dbReference type="EMBL" id="AAAB01008987">
    <property type="protein sequence ID" value="EAA01817.4"/>
    <property type="molecule type" value="Genomic_DNA"/>
</dbReference>
<dbReference type="SMR" id="Q7PX35"/>
<dbReference type="FunCoup" id="Q7PX35">
    <property type="interactions" value="2836"/>
</dbReference>
<dbReference type="STRING" id="7165.Q7PX35"/>
<dbReference type="PaxDb" id="7165-AGAP001195-PA"/>
<dbReference type="EnsemblMetazoa" id="AGAP001195-RA">
    <property type="protein sequence ID" value="AGAP001195-PA"/>
    <property type="gene ID" value="AGAP001195"/>
</dbReference>
<dbReference type="GeneID" id="1281974"/>
<dbReference type="KEGG" id="aga:1281974"/>
<dbReference type="CTD" id="44409"/>
<dbReference type="VEuPathDB" id="VectorBase:AGAMI1_003986"/>
<dbReference type="VEuPathDB" id="VectorBase:AGAP001195"/>
<dbReference type="eggNOG" id="KOG1104">
    <property type="taxonomic scope" value="Eukaryota"/>
</dbReference>
<dbReference type="HOGENOM" id="CLU_013207_0_0_1"/>
<dbReference type="InParanoid" id="Q7PX35"/>
<dbReference type="OMA" id="CAAEGLM"/>
<dbReference type="PhylomeDB" id="Q7PX35"/>
<dbReference type="Proteomes" id="UP000007062">
    <property type="component" value="Chromosome 2R"/>
</dbReference>
<dbReference type="GO" id="GO:0005846">
    <property type="term" value="C:nuclear cap binding complex"/>
    <property type="evidence" value="ECO:0000318"/>
    <property type="project" value="GO_Central"/>
</dbReference>
<dbReference type="GO" id="GO:0005634">
    <property type="term" value="C:nucleus"/>
    <property type="evidence" value="ECO:0000318"/>
    <property type="project" value="GO_Central"/>
</dbReference>
<dbReference type="GO" id="GO:0003729">
    <property type="term" value="F:mRNA binding"/>
    <property type="evidence" value="ECO:0000318"/>
    <property type="project" value="GO_Central"/>
</dbReference>
<dbReference type="GO" id="GO:0000339">
    <property type="term" value="F:RNA cap binding"/>
    <property type="evidence" value="ECO:0000318"/>
    <property type="project" value="GO_Central"/>
</dbReference>
<dbReference type="GO" id="GO:0006370">
    <property type="term" value="P:7-methylguanosine mRNA capping"/>
    <property type="evidence" value="ECO:0007669"/>
    <property type="project" value="UniProtKB-KW"/>
</dbReference>
<dbReference type="GO" id="GO:0006406">
    <property type="term" value="P:mRNA export from nucleus"/>
    <property type="evidence" value="ECO:0007669"/>
    <property type="project" value="InterPro"/>
</dbReference>
<dbReference type="GO" id="GO:0000184">
    <property type="term" value="P:nuclear-transcribed mRNA catabolic process, nonsense-mediated decay"/>
    <property type="evidence" value="ECO:0000318"/>
    <property type="project" value="GO_Central"/>
</dbReference>
<dbReference type="GO" id="GO:0031047">
    <property type="term" value="P:regulatory ncRNA-mediated gene silencing"/>
    <property type="evidence" value="ECO:0007669"/>
    <property type="project" value="UniProtKB-KW"/>
</dbReference>
<dbReference type="GO" id="GO:0008380">
    <property type="term" value="P:RNA splicing"/>
    <property type="evidence" value="ECO:0007669"/>
    <property type="project" value="UniProtKB-KW"/>
</dbReference>
<dbReference type="FunFam" id="1.25.40.180:FF:000010">
    <property type="entry name" value="Nuclear cap-binding protein subunit 1"/>
    <property type="match status" value="1"/>
</dbReference>
<dbReference type="FunFam" id="1.25.40.180:FF:000041">
    <property type="entry name" value="Nuclear cap-binding protein subunit 1"/>
    <property type="match status" value="1"/>
</dbReference>
<dbReference type="Gene3D" id="1.25.40.180">
    <property type="match status" value="3"/>
</dbReference>
<dbReference type="InterPro" id="IPR016024">
    <property type="entry name" value="ARM-type_fold"/>
</dbReference>
<dbReference type="InterPro" id="IPR027159">
    <property type="entry name" value="CBP80"/>
</dbReference>
<dbReference type="InterPro" id="IPR015172">
    <property type="entry name" value="MIF4G-like_typ-1"/>
</dbReference>
<dbReference type="InterPro" id="IPR015174">
    <property type="entry name" value="MIF4G-like_typ-2"/>
</dbReference>
<dbReference type="InterPro" id="IPR003890">
    <property type="entry name" value="MIF4G-like_typ-3"/>
</dbReference>
<dbReference type="PANTHER" id="PTHR12412">
    <property type="entry name" value="CAP BINDING PROTEIN"/>
    <property type="match status" value="1"/>
</dbReference>
<dbReference type="PANTHER" id="PTHR12412:SF2">
    <property type="entry name" value="NUCLEAR CAP-BINDING PROTEIN SUBUNIT 1"/>
    <property type="match status" value="1"/>
</dbReference>
<dbReference type="Pfam" id="PF02854">
    <property type="entry name" value="MIF4G"/>
    <property type="match status" value="1"/>
</dbReference>
<dbReference type="Pfam" id="PF09088">
    <property type="entry name" value="MIF4G_like"/>
    <property type="match status" value="1"/>
</dbReference>
<dbReference type="Pfam" id="PF09090">
    <property type="entry name" value="MIF4G_like_2"/>
    <property type="match status" value="1"/>
</dbReference>
<dbReference type="SMART" id="SM00543">
    <property type="entry name" value="MIF4G"/>
    <property type="match status" value="1"/>
</dbReference>
<dbReference type="SUPFAM" id="SSF48371">
    <property type="entry name" value="ARM repeat"/>
    <property type="match status" value="3"/>
</dbReference>
<accession>Q7PX35</accession>
<feature type="chain" id="PRO_0000385231" description="Nuclear cap-binding protein subunit 1">
    <location>
        <begin position="1"/>
        <end position="807"/>
    </location>
</feature>
<feature type="domain" description="MIF4G">
    <location>
        <begin position="31"/>
        <end position="243"/>
    </location>
</feature>
<feature type="region of interest" description="Disordered" evidence="2">
    <location>
        <begin position="669"/>
        <end position="710"/>
    </location>
</feature>
<feature type="compositionally biased region" description="Basic and acidic residues" evidence="2">
    <location>
        <begin position="696"/>
        <end position="710"/>
    </location>
</feature>
<protein>
    <recommendedName>
        <fullName>Nuclear cap-binding protein subunit 1</fullName>
    </recommendedName>
    <alternativeName>
        <fullName>80 kDa nuclear cap-binding protein</fullName>
        <shortName>CBP80</shortName>
        <shortName>NCBP 80 kDa subunit</shortName>
    </alternativeName>
</protein>
<evidence type="ECO:0000250" key="1"/>
<evidence type="ECO:0000256" key="2">
    <source>
        <dbReference type="SAM" id="MobiDB-lite"/>
    </source>
</evidence>
<evidence type="ECO:0000305" key="3"/>
<proteinExistence type="inferred from homology"/>
<keyword id="KW-0506">mRNA capping</keyword>
<keyword id="KW-0507">mRNA processing</keyword>
<keyword id="KW-0508">mRNA splicing</keyword>
<keyword id="KW-0539">Nucleus</keyword>
<keyword id="KW-1185">Reference proteome</keyword>
<keyword id="KW-0943">RNA-mediated gene silencing</keyword>
<gene>
    <name type="primary">Cbp80</name>
    <name type="ORF">AGAP001195</name>
</gene>
<reference key="1">
    <citation type="journal article" date="2002" name="Science">
        <title>The genome sequence of the malaria mosquito Anopheles gambiae.</title>
        <authorList>
            <person name="Holt R.A."/>
            <person name="Subramanian G.M."/>
            <person name="Halpern A."/>
            <person name="Sutton G.G."/>
            <person name="Charlab R."/>
            <person name="Nusskern D.R."/>
            <person name="Wincker P."/>
            <person name="Clark A.G."/>
            <person name="Ribeiro J.M.C."/>
            <person name="Wides R."/>
            <person name="Salzberg S.L."/>
            <person name="Loftus B.J."/>
            <person name="Yandell M.D."/>
            <person name="Majoros W.H."/>
            <person name="Rusch D.B."/>
            <person name="Lai Z."/>
            <person name="Kraft C.L."/>
            <person name="Abril J.F."/>
            <person name="Anthouard V."/>
            <person name="Arensburger P."/>
            <person name="Atkinson P.W."/>
            <person name="Baden H."/>
            <person name="de Berardinis V."/>
            <person name="Baldwin D."/>
            <person name="Benes V."/>
            <person name="Biedler J."/>
            <person name="Blass C."/>
            <person name="Bolanos R."/>
            <person name="Boscus D."/>
            <person name="Barnstead M."/>
            <person name="Cai S."/>
            <person name="Center A."/>
            <person name="Chaturverdi K."/>
            <person name="Christophides G.K."/>
            <person name="Chrystal M.A.M."/>
            <person name="Clamp M."/>
            <person name="Cravchik A."/>
            <person name="Curwen V."/>
            <person name="Dana A."/>
            <person name="Delcher A."/>
            <person name="Dew I."/>
            <person name="Evans C.A."/>
            <person name="Flanigan M."/>
            <person name="Grundschober-Freimoser A."/>
            <person name="Friedli L."/>
            <person name="Gu Z."/>
            <person name="Guan P."/>
            <person name="Guigo R."/>
            <person name="Hillenmeyer M.E."/>
            <person name="Hladun S.L."/>
            <person name="Hogan J.R."/>
            <person name="Hong Y.S."/>
            <person name="Hoover J."/>
            <person name="Jaillon O."/>
            <person name="Ke Z."/>
            <person name="Kodira C.D."/>
            <person name="Kokoza E."/>
            <person name="Koutsos A."/>
            <person name="Letunic I."/>
            <person name="Levitsky A.A."/>
            <person name="Liang Y."/>
            <person name="Lin J.-J."/>
            <person name="Lobo N.F."/>
            <person name="Lopez J.R."/>
            <person name="Malek J.A."/>
            <person name="McIntosh T.C."/>
            <person name="Meister S."/>
            <person name="Miller J.R."/>
            <person name="Mobarry C."/>
            <person name="Mongin E."/>
            <person name="Murphy S.D."/>
            <person name="O'Brochta D.A."/>
            <person name="Pfannkoch C."/>
            <person name="Qi R."/>
            <person name="Regier M.A."/>
            <person name="Remington K."/>
            <person name="Shao H."/>
            <person name="Sharakhova M.V."/>
            <person name="Sitter C.D."/>
            <person name="Shetty J."/>
            <person name="Smith T.J."/>
            <person name="Strong R."/>
            <person name="Sun J."/>
            <person name="Thomasova D."/>
            <person name="Ton L.Q."/>
            <person name="Topalis P."/>
            <person name="Tu Z.J."/>
            <person name="Unger M.F."/>
            <person name="Walenz B."/>
            <person name="Wang A.H."/>
            <person name="Wang J."/>
            <person name="Wang M."/>
            <person name="Wang X."/>
            <person name="Woodford K.J."/>
            <person name="Wortman J.R."/>
            <person name="Wu M."/>
            <person name="Yao A."/>
            <person name="Zdobnov E.M."/>
            <person name="Zhang H."/>
            <person name="Zhao Q."/>
            <person name="Zhao S."/>
            <person name="Zhu S.C."/>
            <person name="Zhimulev I."/>
            <person name="Coluzzi M."/>
            <person name="della Torre A."/>
            <person name="Roth C.W."/>
            <person name="Louis C."/>
            <person name="Kalush F."/>
            <person name="Mural R.J."/>
            <person name="Myers E.W."/>
            <person name="Adams M.D."/>
            <person name="Smith H.O."/>
            <person name="Broder S."/>
            <person name="Gardner M.J."/>
            <person name="Fraser C.M."/>
            <person name="Birney E."/>
            <person name="Bork P."/>
            <person name="Brey P.T."/>
            <person name="Venter J.C."/>
            <person name="Weissenbach J."/>
            <person name="Kafatos F.C."/>
            <person name="Collins F.H."/>
            <person name="Hoffman S.L."/>
        </authorList>
    </citation>
    <scope>NUCLEOTIDE SEQUENCE [LARGE SCALE GENOMIC DNA]</scope>
    <source>
        <strain>PEST</strain>
    </source>
</reference>
<comment type="function">
    <text evidence="1">Component of the cap-binding complex (CBC), which binds cotranscriptionally to the 5'-cap of pre-mRNAs and is involved in various processes such as pre-mRNA splicing and RNA-mediated gene silencing (RNAi). The CBC complex is involved in miRNA-mediated RNA interference and is required for primary microRNAs (miRNAs) processing. Also involved in innate immunity via the short interfering RNAs (siRNAs) processing machinery by restricting the viral RNA production. In the CBC complex, Cbp80 does not bind directly capped RNAs (m7GpppG-capped RNA) but is required to stabilize the movement of the N-terminal loop of Cbp20 and lock the CBC into a high affinity cap-binding state with the cap structure (By similarity).</text>
</comment>
<comment type="subunit">
    <text evidence="1">Component of the nuclear cap-binding complex (CBC), a heterodimer composed of Cbp80 and Cbp20 that interacts with m7GpppG-capped RNA.</text>
</comment>
<comment type="subcellular location">
    <subcellularLocation>
        <location evidence="1">Nucleus</location>
    </subcellularLocation>
</comment>
<comment type="similarity">
    <text evidence="3">Belongs to the NCBP1 family.</text>
</comment>
<organism>
    <name type="scientific">Anopheles gambiae</name>
    <name type="common">African malaria mosquito</name>
    <dbReference type="NCBI Taxonomy" id="7165"/>
    <lineage>
        <taxon>Eukaryota</taxon>
        <taxon>Metazoa</taxon>
        <taxon>Ecdysozoa</taxon>
        <taxon>Arthropoda</taxon>
        <taxon>Hexapoda</taxon>
        <taxon>Insecta</taxon>
        <taxon>Pterygota</taxon>
        <taxon>Neoptera</taxon>
        <taxon>Endopterygota</taxon>
        <taxon>Diptera</taxon>
        <taxon>Nematocera</taxon>
        <taxon>Culicoidea</taxon>
        <taxon>Culicidae</taxon>
        <taxon>Anophelinae</taxon>
        <taxon>Anopheles</taxon>
    </lineage>
</organism>